<gene>
    <name evidence="1" type="primary">nifH</name>
    <name type="ordered locus">Daud_0143</name>
</gene>
<organism>
    <name type="scientific">Desulforudis audaxviator (strain MP104C)</name>
    <dbReference type="NCBI Taxonomy" id="477974"/>
    <lineage>
        <taxon>Bacteria</taxon>
        <taxon>Bacillati</taxon>
        <taxon>Bacillota</taxon>
        <taxon>Clostridia</taxon>
        <taxon>Thermoanaerobacterales</taxon>
        <taxon>Candidatus Desulforudaceae</taxon>
        <taxon>Candidatus Desulforudis</taxon>
    </lineage>
</organism>
<accession>B1I0Y8</accession>
<keyword id="KW-0004">4Fe-4S</keyword>
<keyword id="KW-0013">ADP-ribosylation</keyword>
<keyword id="KW-0067">ATP-binding</keyword>
<keyword id="KW-0408">Iron</keyword>
<keyword id="KW-0411">Iron-sulfur</keyword>
<keyword id="KW-0479">Metal-binding</keyword>
<keyword id="KW-0535">Nitrogen fixation</keyword>
<keyword id="KW-0547">Nucleotide-binding</keyword>
<keyword id="KW-0560">Oxidoreductase</keyword>
<keyword id="KW-1185">Reference proteome</keyword>
<protein>
    <recommendedName>
        <fullName evidence="1">Nitrogenase iron protein</fullName>
        <ecNumber evidence="1">1.18.6.1</ecNumber>
    </recommendedName>
    <alternativeName>
        <fullName evidence="1">Nitrogenase Fe protein</fullName>
    </alternativeName>
    <alternativeName>
        <fullName evidence="1">Nitrogenase component II</fullName>
    </alternativeName>
    <alternativeName>
        <fullName evidence="1">Nitrogenase reductase</fullName>
    </alternativeName>
</protein>
<dbReference type="EC" id="1.18.6.1" evidence="1"/>
<dbReference type="EMBL" id="CP000860">
    <property type="protein sequence ID" value="ACA58711.1"/>
    <property type="molecule type" value="Genomic_DNA"/>
</dbReference>
<dbReference type="RefSeq" id="WP_012301305.1">
    <property type="nucleotide sequence ID" value="NC_010424.1"/>
</dbReference>
<dbReference type="SMR" id="B1I0Y8"/>
<dbReference type="STRING" id="477974.Daud_0143"/>
<dbReference type="KEGG" id="dau:Daud_0143"/>
<dbReference type="eggNOG" id="COG1348">
    <property type="taxonomic scope" value="Bacteria"/>
</dbReference>
<dbReference type="HOGENOM" id="CLU_059373_0_0_9"/>
<dbReference type="OrthoDB" id="9778641at2"/>
<dbReference type="Proteomes" id="UP000008544">
    <property type="component" value="Chromosome"/>
</dbReference>
<dbReference type="GO" id="GO:0051539">
    <property type="term" value="F:4 iron, 4 sulfur cluster binding"/>
    <property type="evidence" value="ECO:0007669"/>
    <property type="project" value="UniProtKB-KW"/>
</dbReference>
<dbReference type="GO" id="GO:0005524">
    <property type="term" value="F:ATP binding"/>
    <property type="evidence" value="ECO:0007669"/>
    <property type="project" value="UniProtKB-UniRule"/>
</dbReference>
<dbReference type="GO" id="GO:0046872">
    <property type="term" value="F:metal ion binding"/>
    <property type="evidence" value="ECO:0007669"/>
    <property type="project" value="UniProtKB-KW"/>
</dbReference>
<dbReference type="GO" id="GO:0016163">
    <property type="term" value="F:nitrogenase activity"/>
    <property type="evidence" value="ECO:0007669"/>
    <property type="project" value="UniProtKB-UniRule"/>
</dbReference>
<dbReference type="GO" id="GO:0009399">
    <property type="term" value="P:nitrogen fixation"/>
    <property type="evidence" value="ECO:0007669"/>
    <property type="project" value="UniProtKB-UniRule"/>
</dbReference>
<dbReference type="CDD" id="cd02040">
    <property type="entry name" value="NifH"/>
    <property type="match status" value="1"/>
</dbReference>
<dbReference type="Gene3D" id="3.40.50.300">
    <property type="entry name" value="P-loop containing nucleotide triphosphate hydrolases"/>
    <property type="match status" value="1"/>
</dbReference>
<dbReference type="HAMAP" id="MF_00533">
    <property type="entry name" value="NifH"/>
    <property type="match status" value="1"/>
</dbReference>
<dbReference type="InterPro" id="IPR030655">
    <property type="entry name" value="NifH/chlL_CS"/>
</dbReference>
<dbReference type="InterPro" id="IPR000392">
    <property type="entry name" value="NifH/frxC"/>
</dbReference>
<dbReference type="InterPro" id="IPR005977">
    <property type="entry name" value="Nitrogenase_Fe_NifH"/>
</dbReference>
<dbReference type="InterPro" id="IPR027417">
    <property type="entry name" value="P-loop_NTPase"/>
</dbReference>
<dbReference type="NCBIfam" id="TIGR01287">
    <property type="entry name" value="nifH"/>
    <property type="match status" value="1"/>
</dbReference>
<dbReference type="PANTHER" id="PTHR42864">
    <property type="entry name" value="LIGHT-INDEPENDENT PROTOCHLOROPHYLLIDE REDUCTASE IRON-SULFUR ATP-BINDING PROTEIN"/>
    <property type="match status" value="1"/>
</dbReference>
<dbReference type="PANTHER" id="PTHR42864:SF2">
    <property type="entry name" value="LIGHT-INDEPENDENT PROTOCHLOROPHYLLIDE REDUCTASE IRON-SULFUR ATP-BINDING PROTEIN"/>
    <property type="match status" value="1"/>
</dbReference>
<dbReference type="Pfam" id="PF00142">
    <property type="entry name" value="Fer4_NifH"/>
    <property type="match status" value="1"/>
</dbReference>
<dbReference type="PIRSF" id="PIRSF000363">
    <property type="entry name" value="Nitrogenase_iron"/>
    <property type="match status" value="1"/>
</dbReference>
<dbReference type="PRINTS" id="PR00091">
    <property type="entry name" value="NITROGNASEII"/>
</dbReference>
<dbReference type="SUPFAM" id="SSF52540">
    <property type="entry name" value="P-loop containing nucleoside triphosphate hydrolases"/>
    <property type="match status" value="1"/>
</dbReference>
<dbReference type="PROSITE" id="PS00746">
    <property type="entry name" value="NIFH_FRXC_1"/>
    <property type="match status" value="1"/>
</dbReference>
<dbReference type="PROSITE" id="PS00692">
    <property type="entry name" value="NIFH_FRXC_2"/>
    <property type="match status" value="1"/>
</dbReference>
<dbReference type="PROSITE" id="PS51026">
    <property type="entry name" value="NIFH_FRXC_3"/>
    <property type="match status" value="1"/>
</dbReference>
<evidence type="ECO:0000255" key="1">
    <source>
        <dbReference type="HAMAP-Rule" id="MF_00533"/>
    </source>
</evidence>
<reference key="1">
    <citation type="submission" date="2007-10" db="EMBL/GenBank/DDBJ databases">
        <title>Complete sequence of chromosome of Desulforudis audaxviator MP104C.</title>
        <authorList>
            <person name="Copeland A."/>
            <person name="Lucas S."/>
            <person name="Lapidus A."/>
            <person name="Barry K."/>
            <person name="Glavina del Rio T."/>
            <person name="Dalin E."/>
            <person name="Tice H."/>
            <person name="Bruce D."/>
            <person name="Pitluck S."/>
            <person name="Lowry S.R."/>
            <person name="Larimer F."/>
            <person name="Land M.L."/>
            <person name="Hauser L."/>
            <person name="Kyrpides N."/>
            <person name="Ivanova N.N."/>
            <person name="Richardson P."/>
        </authorList>
    </citation>
    <scope>NUCLEOTIDE SEQUENCE [LARGE SCALE GENOMIC DNA]</scope>
    <source>
        <strain>MP104C</strain>
    </source>
</reference>
<name>NIFH_DESAP</name>
<proteinExistence type="inferred from homology"/>
<comment type="function">
    <text evidence="1">The key enzymatic reactions in nitrogen fixation are catalyzed by the nitrogenase complex, which has 2 components: the iron protein and the molybdenum-iron protein.</text>
</comment>
<comment type="catalytic activity">
    <reaction evidence="1">
        <text>N2 + 8 reduced [2Fe-2S]-[ferredoxin] + 16 ATP + 16 H2O = H2 + 8 oxidized [2Fe-2S]-[ferredoxin] + 2 NH4(+) + 16 ADP + 16 phosphate + 6 H(+)</text>
        <dbReference type="Rhea" id="RHEA:21448"/>
        <dbReference type="Rhea" id="RHEA-COMP:10000"/>
        <dbReference type="Rhea" id="RHEA-COMP:10001"/>
        <dbReference type="ChEBI" id="CHEBI:15377"/>
        <dbReference type="ChEBI" id="CHEBI:15378"/>
        <dbReference type="ChEBI" id="CHEBI:17997"/>
        <dbReference type="ChEBI" id="CHEBI:18276"/>
        <dbReference type="ChEBI" id="CHEBI:28938"/>
        <dbReference type="ChEBI" id="CHEBI:30616"/>
        <dbReference type="ChEBI" id="CHEBI:33737"/>
        <dbReference type="ChEBI" id="CHEBI:33738"/>
        <dbReference type="ChEBI" id="CHEBI:43474"/>
        <dbReference type="ChEBI" id="CHEBI:456216"/>
        <dbReference type="EC" id="1.18.6.1"/>
    </reaction>
</comment>
<comment type="cofactor">
    <cofactor evidence="1">
        <name>[4Fe-4S] cluster</name>
        <dbReference type="ChEBI" id="CHEBI:49883"/>
    </cofactor>
    <text evidence="1">Binds 1 [4Fe-4S] cluster per dimer.</text>
</comment>
<comment type="subunit">
    <text evidence="1">Homodimer.</text>
</comment>
<comment type="PTM">
    <text evidence="1">The reversible ADP-ribosylation of Arg-100 inactivates the nitrogenase reductase and regulates nitrogenase activity.</text>
</comment>
<comment type="similarity">
    <text evidence="1">Belongs to the NifH/BchL/ChlL family.</text>
</comment>
<feature type="chain" id="PRO_1000211866" description="Nitrogenase iron protein">
    <location>
        <begin position="1"/>
        <end position="280"/>
    </location>
</feature>
<feature type="binding site" evidence="1">
    <location>
        <begin position="9"/>
        <end position="16"/>
    </location>
    <ligand>
        <name>ATP</name>
        <dbReference type="ChEBI" id="CHEBI:30616"/>
    </ligand>
</feature>
<feature type="binding site" evidence="1">
    <location>
        <position position="97"/>
    </location>
    <ligand>
        <name>[4Fe-4S] cluster</name>
        <dbReference type="ChEBI" id="CHEBI:49883"/>
        <note>ligand shared between dimeric partners</note>
    </ligand>
</feature>
<feature type="binding site" evidence="1">
    <location>
        <position position="132"/>
    </location>
    <ligand>
        <name>[4Fe-4S] cluster</name>
        <dbReference type="ChEBI" id="CHEBI:49883"/>
        <note>ligand shared between dimeric partners</note>
    </ligand>
</feature>
<feature type="modified residue" description="ADP-ribosylarginine; by dinitrogenase reductase ADP-ribosyltransferase" evidence="1">
    <location>
        <position position="100"/>
    </location>
</feature>
<sequence>MTRKIAIYGKGGIGKSTTTQNTAAAMAYFFGKRIMIHGCDPKADSTRLILGGMMQTTVMDTLREEGEEGVTLDRVRLQGFGEIDCVESGGPEPGVGCAGRGVITAINLMEDLNAYGDELDFVFFDVLGDVVCGGFAMPVREGKAQEIYIVASGEMMALYAANNICRGMVKYAEQSGVRLGGIICNSRRVEGERELIEEFCARLGTRMIMFVPRDNIVQKAEFNRKTVTEFAPDSEQAQVYRELARRIIENDHFVIPTPMTMDEMESLVLKYGLLDLGEAS</sequence>